<evidence type="ECO:0000250" key="1">
    <source>
        <dbReference type="UniProtKB" id="O43427"/>
    </source>
</evidence>
<evidence type="ECO:0000269" key="2">
    <source>
    </source>
</evidence>
<evidence type="ECO:0000305" key="3">
    <source>
    </source>
</evidence>
<evidence type="ECO:0000312" key="4">
    <source>
        <dbReference type="EMBL" id="AAH85535.1"/>
    </source>
</evidence>
<evidence type="ECO:0000312" key="5">
    <source>
        <dbReference type="ZFIN" id="ZDB-GENE-040630-2"/>
    </source>
</evidence>
<sequence>MELDVFVGNTTVLDEDIYQLWLDGHSVSDVVRQRMDAGVLLECEASPDVLQSDTIDQFRTFQMCERLLQSPSKVANQLLFQIPSDQQAMLIERYYEFDSVFAREVLGKKLSKGTKKDLDDVSAKTGIALKSCRRQFDNFKRVFKVVEELKGPLVENIQRHFLLSDDLARDYATIVFFANSRFETGKRKLQYLSFQDFAFCAGQLISYWTVGAVDNMIEDMDVDLEKDFLHDLKDLKVLVNDKDLLDQHKSLVCGQLRGKIKVFNEMEASFKNLSRALVNIASKLTHAKDVRDLFIDLVEKFIEPCRSDKWTSGDLRLFLTHYSTSVHTLEAFRHQVIWDRYMGVIKSCILKMYHD</sequence>
<name>FIBP_DANRE</name>
<gene>
    <name evidence="5" type="primary">fibpb</name>
    <name evidence="5" type="synonym">fibpl</name>
</gene>
<accession>Q6T938</accession>
<proteinExistence type="evidence at protein level"/>
<keyword id="KW-0472">Membrane</keyword>
<keyword id="KW-0539">Nucleus</keyword>
<keyword id="KW-1185">Reference proteome</keyword>
<feature type="chain" id="PRO_0000433930" description="Acidic fibroblast growth factor intracellular-binding protein B">
    <location>
        <begin position="1"/>
        <end position="355"/>
    </location>
</feature>
<organism>
    <name type="scientific">Danio rerio</name>
    <name type="common">Zebrafish</name>
    <name type="synonym">Brachydanio rerio</name>
    <dbReference type="NCBI Taxonomy" id="7955"/>
    <lineage>
        <taxon>Eukaryota</taxon>
        <taxon>Metazoa</taxon>
        <taxon>Chordata</taxon>
        <taxon>Craniata</taxon>
        <taxon>Vertebrata</taxon>
        <taxon>Euteleostomi</taxon>
        <taxon>Actinopterygii</taxon>
        <taxon>Neopterygii</taxon>
        <taxon>Teleostei</taxon>
        <taxon>Ostariophysi</taxon>
        <taxon>Cypriniformes</taxon>
        <taxon>Danionidae</taxon>
        <taxon>Danioninae</taxon>
        <taxon>Danio</taxon>
    </lineage>
</organism>
<protein>
    <recommendedName>
        <fullName>Acidic fibroblast growth factor intracellular-binding protein B</fullName>
        <shortName>aFGF intracellular-binding protein B</shortName>
    </recommendedName>
    <alternativeName>
        <fullName>FGF-1 intracellular-binding protein B</fullName>
    </alternativeName>
</protein>
<dbReference type="EMBL" id="AY427781">
    <property type="protein sequence ID" value="AAR23113.1"/>
    <property type="molecule type" value="mRNA"/>
</dbReference>
<dbReference type="EMBL" id="BC085535">
    <property type="protein sequence ID" value="AAH85535.1"/>
    <property type="molecule type" value="mRNA"/>
</dbReference>
<dbReference type="EMBL" id="FP236853">
    <property type="status" value="NOT_ANNOTATED_CDS"/>
    <property type="molecule type" value="Genomic_DNA"/>
</dbReference>
<dbReference type="RefSeq" id="NP_998026.1">
    <property type="nucleotide sequence ID" value="NM_212861.2"/>
</dbReference>
<dbReference type="DIP" id="DIP-48705N"/>
<dbReference type="FunCoup" id="Q6T938">
    <property type="interactions" value="1008"/>
</dbReference>
<dbReference type="IntAct" id="Q6T938">
    <property type="interactions" value="1"/>
</dbReference>
<dbReference type="STRING" id="7955.ENSDARP00000119615"/>
<dbReference type="PaxDb" id="7955-ENSDARP00000035929"/>
<dbReference type="DNASU" id="405787"/>
<dbReference type="GeneID" id="405787"/>
<dbReference type="KEGG" id="dre:405787"/>
<dbReference type="AGR" id="ZFIN:ZDB-GENE-040630-2"/>
<dbReference type="CTD" id="405787"/>
<dbReference type="ZFIN" id="ZDB-GENE-040630-2">
    <property type="gene designation" value="fibpb"/>
</dbReference>
<dbReference type="eggNOG" id="ENOG502QPQ2">
    <property type="taxonomic scope" value="Eukaryota"/>
</dbReference>
<dbReference type="InParanoid" id="Q6T938"/>
<dbReference type="OrthoDB" id="4062651at2759"/>
<dbReference type="PhylomeDB" id="Q6T938"/>
<dbReference type="TreeFam" id="TF323763"/>
<dbReference type="PRO" id="PR:Q6T938"/>
<dbReference type="Proteomes" id="UP000000437">
    <property type="component" value="Chromosome 21"/>
</dbReference>
<dbReference type="GO" id="GO:0012505">
    <property type="term" value="C:endomembrane system"/>
    <property type="evidence" value="ECO:0007669"/>
    <property type="project" value="UniProtKB-SubCell"/>
</dbReference>
<dbReference type="GO" id="GO:0016020">
    <property type="term" value="C:membrane"/>
    <property type="evidence" value="ECO:0007669"/>
    <property type="project" value="UniProtKB-KW"/>
</dbReference>
<dbReference type="GO" id="GO:0005634">
    <property type="term" value="C:nucleus"/>
    <property type="evidence" value="ECO:0000316"/>
    <property type="project" value="ZFIN"/>
</dbReference>
<dbReference type="GO" id="GO:0017134">
    <property type="term" value="F:fibroblast growth factor binding"/>
    <property type="evidence" value="ECO:0000318"/>
    <property type="project" value="GO_Central"/>
</dbReference>
<dbReference type="GO" id="GO:0060271">
    <property type="term" value="P:cilium assembly"/>
    <property type="evidence" value="ECO:0000315"/>
    <property type="project" value="ZFIN"/>
</dbReference>
<dbReference type="GO" id="GO:0060026">
    <property type="term" value="P:convergent extension"/>
    <property type="evidence" value="ECO:0000315"/>
    <property type="project" value="ZFIN"/>
</dbReference>
<dbReference type="GO" id="GO:0007368">
    <property type="term" value="P:determination of left/right symmetry"/>
    <property type="evidence" value="ECO:0000315"/>
    <property type="project" value="ZFIN"/>
</dbReference>
<dbReference type="GO" id="GO:0070121">
    <property type="term" value="P:Kupffer's vesicle development"/>
    <property type="evidence" value="ECO:0000315"/>
    <property type="project" value="ZFIN"/>
</dbReference>
<dbReference type="InterPro" id="IPR008614">
    <property type="entry name" value="FIBP"/>
</dbReference>
<dbReference type="PANTHER" id="PTHR13223">
    <property type="entry name" value="ACIDIC FIBROBLAST GROWTH FACTOR INTRACELLULAR BINDING PROTEIN"/>
    <property type="match status" value="1"/>
</dbReference>
<dbReference type="PANTHER" id="PTHR13223:SF2">
    <property type="entry name" value="ACIDIC FIBROBLAST GROWTH FACTOR INTRACELLULAR-BINDING PROTEIN"/>
    <property type="match status" value="1"/>
</dbReference>
<dbReference type="Pfam" id="PF05427">
    <property type="entry name" value="FIBP"/>
    <property type="match status" value="1"/>
</dbReference>
<reference key="1">
    <citation type="submission" date="2003-09" db="EMBL/GenBank/DDBJ databases">
        <title>Zebrafish aFGF intracellular binding protein (FIBP) gene maps to linkage group 21.</title>
        <authorList>
            <person name="Joseph E.M."/>
            <person name="Fishman M.C."/>
        </authorList>
    </citation>
    <scope>NUCLEOTIDE SEQUENCE [MRNA]</scope>
</reference>
<reference key="2">
    <citation type="submission" date="2004-11" db="EMBL/GenBank/DDBJ databases">
        <authorList>
            <consortium name="NIH - Zebrafish Gene Collection (ZGC) project"/>
        </authorList>
    </citation>
    <scope>NUCLEOTIDE SEQUENCE [LARGE SCALE MRNA]</scope>
    <source>
        <tissue evidence="4">Ovary</tissue>
    </source>
</reference>
<reference key="3">
    <citation type="journal article" date="2013" name="Nature">
        <title>The zebrafish reference genome sequence and its relationship to the human genome.</title>
        <authorList>
            <person name="Howe K."/>
            <person name="Clark M.D."/>
            <person name="Torroja C.F."/>
            <person name="Torrance J."/>
            <person name="Berthelot C."/>
            <person name="Muffato M."/>
            <person name="Collins J.E."/>
            <person name="Humphray S."/>
            <person name="McLaren K."/>
            <person name="Matthews L."/>
            <person name="McLaren S."/>
            <person name="Sealy I."/>
            <person name="Caccamo M."/>
            <person name="Churcher C."/>
            <person name="Scott C."/>
            <person name="Barrett J.C."/>
            <person name="Koch R."/>
            <person name="Rauch G.J."/>
            <person name="White S."/>
            <person name="Chow W."/>
            <person name="Kilian B."/>
            <person name="Quintais L.T."/>
            <person name="Guerra-Assuncao J.A."/>
            <person name="Zhou Y."/>
            <person name="Gu Y."/>
            <person name="Yen J."/>
            <person name="Vogel J.H."/>
            <person name="Eyre T."/>
            <person name="Redmond S."/>
            <person name="Banerjee R."/>
            <person name="Chi J."/>
            <person name="Fu B."/>
            <person name="Langley E."/>
            <person name="Maguire S.F."/>
            <person name="Laird G.K."/>
            <person name="Lloyd D."/>
            <person name="Kenyon E."/>
            <person name="Donaldson S."/>
            <person name="Sehra H."/>
            <person name="Almeida-King J."/>
            <person name="Loveland J."/>
            <person name="Trevanion S."/>
            <person name="Jones M."/>
            <person name="Quail M."/>
            <person name="Willey D."/>
            <person name="Hunt A."/>
            <person name="Burton J."/>
            <person name="Sims S."/>
            <person name="McLay K."/>
            <person name="Plumb B."/>
            <person name="Davis J."/>
            <person name="Clee C."/>
            <person name="Oliver K."/>
            <person name="Clark R."/>
            <person name="Riddle C."/>
            <person name="Elliot D."/>
            <person name="Threadgold G."/>
            <person name="Harden G."/>
            <person name="Ware D."/>
            <person name="Begum S."/>
            <person name="Mortimore B."/>
            <person name="Kerry G."/>
            <person name="Heath P."/>
            <person name="Phillimore B."/>
            <person name="Tracey A."/>
            <person name="Corby N."/>
            <person name="Dunn M."/>
            <person name="Johnson C."/>
            <person name="Wood J."/>
            <person name="Clark S."/>
            <person name="Pelan S."/>
            <person name="Griffiths G."/>
            <person name="Smith M."/>
            <person name="Glithero R."/>
            <person name="Howden P."/>
            <person name="Barker N."/>
            <person name="Lloyd C."/>
            <person name="Stevens C."/>
            <person name="Harley J."/>
            <person name="Holt K."/>
            <person name="Panagiotidis G."/>
            <person name="Lovell J."/>
            <person name="Beasley H."/>
            <person name="Henderson C."/>
            <person name="Gordon D."/>
            <person name="Auger K."/>
            <person name="Wright D."/>
            <person name="Collins J."/>
            <person name="Raisen C."/>
            <person name="Dyer L."/>
            <person name="Leung K."/>
            <person name="Robertson L."/>
            <person name="Ambridge K."/>
            <person name="Leongamornlert D."/>
            <person name="McGuire S."/>
            <person name="Gilderthorp R."/>
            <person name="Griffiths C."/>
            <person name="Manthravadi D."/>
            <person name="Nichol S."/>
            <person name="Barker G."/>
            <person name="Whitehead S."/>
            <person name="Kay M."/>
            <person name="Brown J."/>
            <person name="Murnane C."/>
            <person name="Gray E."/>
            <person name="Humphries M."/>
            <person name="Sycamore N."/>
            <person name="Barker D."/>
            <person name="Saunders D."/>
            <person name="Wallis J."/>
            <person name="Babbage A."/>
            <person name="Hammond S."/>
            <person name="Mashreghi-Mohammadi M."/>
            <person name="Barr L."/>
            <person name="Martin S."/>
            <person name="Wray P."/>
            <person name="Ellington A."/>
            <person name="Matthews N."/>
            <person name="Ellwood M."/>
            <person name="Woodmansey R."/>
            <person name="Clark G."/>
            <person name="Cooper J."/>
            <person name="Tromans A."/>
            <person name="Grafham D."/>
            <person name="Skuce C."/>
            <person name="Pandian R."/>
            <person name="Andrews R."/>
            <person name="Harrison E."/>
            <person name="Kimberley A."/>
            <person name="Garnett J."/>
            <person name="Fosker N."/>
            <person name="Hall R."/>
            <person name="Garner P."/>
            <person name="Kelly D."/>
            <person name="Bird C."/>
            <person name="Palmer S."/>
            <person name="Gehring I."/>
            <person name="Berger A."/>
            <person name="Dooley C.M."/>
            <person name="Ersan-Urun Z."/>
            <person name="Eser C."/>
            <person name="Geiger H."/>
            <person name="Geisler M."/>
            <person name="Karotki L."/>
            <person name="Kirn A."/>
            <person name="Konantz J."/>
            <person name="Konantz M."/>
            <person name="Oberlander M."/>
            <person name="Rudolph-Geiger S."/>
            <person name="Teucke M."/>
            <person name="Lanz C."/>
            <person name="Raddatz G."/>
            <person name="Osoegawa K."/>
            <person name="Zhu B."/>
            <person name="Rapp A."/>
            <person name="Widaa S."/>
            <person name="Langford C."/>
            <person name="Yang F."/>
            <person name="Schuster S.C."/>
            <person name="Carter N.P."/>
            <person name="Harrow J."/>
            <person name="Ning Z."/>
            <person name="Herrero J."/>
            <person name="Searle S.M."/>
            <person name="Enright A."/>
            <person name="Geisler R."/>
            <person name="Plasterk R.H."/>
            <person name="Lee C."/>
            <person name="Westerfield M."/>
            <person name="de Jong P.J."/>
            <person name="Zon L.I."/>
            <person name="Postlethwait J.H."/>
            <person name="Nusslein-Volhard C."/>
            <person name="Hubbard T.J."/>
            <person name="Roest Crollius H."/>
            <person name="Rogers J."/>
            <person name="Stemple D.L."/>
        </authorList>
    </citation>
    <scope>NUCLEOTIDE SEQUENCE [LARGE SCALE GENOMIC DNA]</scope>
    <source>
        <strain>Tuebingen</strain>
    </source>
</reference>
<reference key="4">
    <citation type="journal article" date="2009" name="Proc. Natl. Acad. Sci. U.S.A.">
        <title>FGF-dependent left-right asymmetry patterning in zebrafish is mediated by Ier2 and Fibp1.</title>
        <authorList>
            <person name="Hong S.K."/>
            <person name="Dawid I.B."/>
        </authorList>
    </citation>
    <scope>FUNCTION</scope>
    <scope>SUBCELLULAR LOCATION</scope>
    <scope>INTERACTION WITH IER2</scope>
    <scope>DISRUPTION PHENOTYPE</scope>
    <scope>DEVELOPMENTAL STAGE</scope>
</reference>
<comment type="function">
    <text evidence="1 2">Mediates with IER2 FGF-signaling in Kupffer's vesicle ciliogenesis and in the establishment of laterality in the embryo (PubMed:19164561). May be involved in mitogenic function of FGF1 (By similarity).</text>
</comment>
<comment type="subunit">
    <text evidence="2">Interacts with IER2.</text>
</comment>
<comment type="interaction">
    <interactant intactId="EBI-15752740">
        <id>Q6T938</id>
    </interactant>
    <interactant intactId="EBI-15752758">
        <id>B7SXM5</id>
        <label>ier2</label>
    </interactant>
    <organismsDiffer>false</organismsDiffer>
    <experiments>3</experiments>
</comment>
<comment type="subcellular location">
    <subcellularLocation>
        <location evidence="2">Nucleus</location>
    </subcellularLocation>
    <subcellularLocation>
        <location evidence="1">Endomembrane system</location>
        <topology evidence="1">Peripheral membrane protein</topology>
    </subcellularLocation>
</comment>
<comment type="developmental stage">
    <text evidence="3">Expressed ubiquitously.</text>
</comment>
<comment type="disruption phenotype">
    <text evidence="2">Morpholino knockdown of the protein causes severe deficits in laterality (PubMed:19164561). Partial loss of Kupffer's vesicle cilia with the length of the remaining cilia reduced (PubMed:19164561). Double morpholino knockdown of IER2 and FIBPB causes an almost complete loss of Kupffer's vesicle cilia (PubMed:19164561).</text>
</comment>